<evidence type="ECO:0000250" key="1">
    <source>
        <dbReference type="UniProtKB" id="Q86Y56"/>
    </source>
</evidence>
<evidence type="ECO:0000255" key="2"/>
<evidence type="ECO:0000269" key="3">
    <source>
    </source>
</evidence>
<evidence type="ECO:0000303" key="4">
    <source>
    </source>
</evidence>
<evidence type="ECO:0000305" key="5"/>
<evidence type="ECO:0000305" key="6">
    <source>
    </source>
</evidence>
<evidence type="ECO:0000312" key="7">
    <source>
        <dbReference type="FlyBase" id="FBgn0288976"/>
    </source>
</evidence>
<name>DAAF5_DROME</name>
<dbReference type="EMBL" id="AE014297">
    <property type="protein sequence ID" value="AAN13608.1"/>
    <property type="molecule type" value="Genomic_DNA"/>
</dbReference>
<dbReference type="EMBL" id="BT006021">
    <property type="protein sequence ID" value="AAO74704.1"/>
    <property type="molecule type" value="mRNA"/>
</dbReference>
<dbReference type="RefSeq" id="NP_731905.1">
    <property type="nucleotide sequence ID" value="NM_169581.2"/>
</dbReference>
<dbReference type="FunCoup" id="Q8INF7">
    <property type="interactions" value="676"/>
</dbReference>
<dbReference type="STRING" id="7227.FBpp0082402"/>
<dbReference type="PaxDb" id="7227-FBpp0082402"/>
<dbReference type="DNASU" id="318680"/>
<dbReference type="EnsemblMetazoa" id="FBtr0082943">
    <property type="protein sequence ID" value="FBpp0082402"/>
    <property type="gene ID" value="FBgn0051320"/>
</dbReference>
<dbReference type="GeneID" id="318680"/>
<dbReference type="KEGG" id="dme:Dmel_CG31320"/>
<dbReference type="UCSC" id="CG31320-RA">
    <property type="organism name" value="d. melanogaster"/>
</dbReference>
<dbReference type="AGR" id="FB:FBgn0288976"/>
<dbReference type="CTD" id="54919"/>
<dbReference type="FlyBase" id="FBgn0288976">
    <property type="gene designation" value="Dnaaf5"/>
</dbReference>
<dbReference type="VEuPathDB" id="VectorBase:FBgn0051320"/>
<dbReference type="eggNOG" id="ENOG502QRXT">
    <property type="taxonomic scope" value="Eukaryota"/>
</dbReference>
<dbReference type="GeneTree" id="ENSGT00390000005666"/>
<dbReference type="HOGENOM" id="CLU_010823_1_0_1"/>
<dbReference type="InParanoid" id="Q8INF7"/>
<dbReference type="OMA" id="AFQGPWA"/>
<dbReference type="OrthoDB" id="413572at2759"/>
<dbReference type="PhylomeDB" id="Q8INF7"/>
<dbReference type="BioGRID-ORCS" id="318680">
    <property type="hits" value="0 hits in 1 CRISPR screen"/>
</dbReference>
<dbReference type="GenomeRNAi" id="318680"/>
<dbReference type="PRO" id="PR:Q8INF7"/>
<dbReference type="Proteomes" id="UP000000803">
    <property type="component" value="Chromosome 3R"/>
</dbReference>
<dbReference type="Bgee" id="FBgn0051320">
    <property type="expression patterns" value="Expressed in intestinal stem cell (Drosophila) in digestive tract and 119 other cell types or tissues"/>
</dbReference>
<dbReference type="GO" id="GO:0005737">
    <property type="term" value="C:cytoplasm"/>
    <property type="evidence" value="ECO:0000314"/>
    <property type="project" value="UniProtKB"/>
</dbReference>
<dbReference type="GO" id="GO:0120293">
    <property type="term" value="C:dynein axonemal particle"/>
    <property type="evidence" value="ECO:0000250"/>
    <property type="project" value="UniProtKB"/>
</dbReference>
<dbReference type="GO" id="GO:0045505">
    <property type="term" value="F:dynein intermediate chain binding"/>
    <property type="evidence" value="ECO:0000250"/>
    <property type="project" value="FlyBase"/>
</dbReference>
<dbReference type="GO" id="GO:0008344">
    <property type="term" value="P:adult locomotory behavior"/>
    <property type="evidence" value="ECO:0000315"/>
    <property type="project" value="FlyBase"/>
</dbReference>
<dbReference type="GO" id="GO:0003341">
    <property type="term" value="P:cilium movement"/>
    <property type="evidence" value="ECO:0000250"/>
    <property type="project" value="UniProtKB"/>
</dbReference>
<dbReference type="GO" id="GO:0060294">
    <property type="term" value="P:cilium movement involved in cell motility"/>
    <property type="evidence" value="ECO:0000315"/>
    <property type="project" value="UniProtKB"/>
</dbReference>
<dbReference type="GO" id="GO:0030317">
    <property type="term" value="P:flagellated sperm motility"/>
    <property type="evidence" value="ECO:0000315"/>
    <property type="project" value="UniProtKB"/>
</dbReference>
<dbReference type="GO" id="GO:0036159">
    <property type="term" value="P:inner dynein arm assembly"/>
    <property type="evidence" value="ECO:0000315"/>
    <property type="project" value="UniProtKB"/>
</dbReference>
<dbReference type="GO" id="GO:0036158">
    <property type="term" value="P:outer dynein arm assembly"/>
    <property type="evidence" value="ECO:0000315"/>
    <property type="project" value="UniProtKB"/>
</dbReference>
<dbReference type="GO" id="GO:0007605">
    <property type="term" value="P:sensory perception of sound"/>
    <property type="evidence" value="ECO:0000315"/>
    <property type="project" value="UniProtKB"/>
</dbReference>
<dbReference type="Gene3D" id="1.25.10.10">
    <property type="entry name" value="Leucine-rich Repeat Variant"/>
    <property type="match status" value="2"/>
</dbReference>
<dbReference type="InterPro" id="IPR011989">
    <property type="entry name" value="ARM-like"/>
</dbReference>
<dbReference type="InterPro" id="IPR016024">
    <property type="entry name" value="ARM-type_fold"/>
</dbReference>
<dbReference type="InterPro" id="IPR052623">
    <property type="entry name" value="DAAF5"/>
</dbReference>
<dbReference type="InterPro" id="IPR056497">
    <property type="entry name" value="HEAT_DAAF5"/>
</dbReference>
<dbReference type="PANTHER" id="PTHR16216">
    <property type="entry name" value="DYNEIN ASSEMBLY FACTOR 5, AXONEMAL"/>
    <property type="match status" value="1"/>
</dbReference>
<dbReference type="PANTHER" id="PTHR16216:SF2">
    <property type="entry name" value="DYNEIN AXONEMAL ASSEMBLY FACTOR 5"/>
    <property type="match status" value="1"/>
</dbReference>
<dbReference type="Pfam" id="PF24573">
    <property type="entry name" value="HEAT_DAAF5"/>
    <property type="match status" value="1"/>
</dbReference>
<dbReference type="SUPFAM" id="SSF48371">
    <property type="entry name" value="ARM repeat"/>
    <property type="match status" value="1"/>
</dbReference>
<organism>
    <name type="scientific">Drosophila melanogaster</name>
    <name type="common">Fruit fly</name>
    <dbReference type="NCBI Taxonomy" id="7227"/>
    <lineage>
        <taxon>Eukaryota</taxon>
        <taxon>Metazoa</taxon>
        <taxon>Ecdysozoa</taxon>
        <taxon>Arthropoda</taxon>
        <taxon>Hexapoda</taxon>
        <taxon>Insecta</taxon>
        <taxon>Pterygota</taxon>
        <taxon>Neoptera</taxon>
        <taxon>Endopterygota</taxon>
        <taxon>Diptera</taxon>
        <taxon>Brachycera</taxon>
        <taxon>Muscomorpha</taxon>
        <taxon>Ephydroidea</taxon>
        <taxon>Drosophilidae</taxon>
        <taxon>Drosophila</taxon>
        <taxon>Sophophora</taxon>
    </lineage>
</organism>
<accession>Q8INF7</accession>
<sequence>MGFDIDSQKICSDLESSDRRLKTTVLDELLDKCKEATNSESADKIADVFDKLYLHLLKCYEDRFESVRSKAIQVVSAFLSSLPPTDFHLMNVVSTLAERMGKAETVEPSEEIRLLYIAQLNLMICLYEKMENVGVFRECYPLVVKILIKSIKDDYPVVQREGCSAVVTLSRLADTQEFRPFTESILLPLYTMLNHKHAQARISAIQAIARLSLHMDASGDAMRRLFNEVSPLLMDTMPLVRREVGQMGILMLMELLDRYSFFERILPLVLCCLKDESPEVLNHIYPQWLKCGIQYFNENEAELSQQEISDLPVENYPKDVKRPTIGCRGLVQRSLRLLQLITRETSDWKDNVRLHALKLLYQFVLHAEAAMTAKFFEIYGDLAHACIDHVAEVNAEAAKVADLMGRLLSYDAWIDHGFDGLERNARESYMRCFYHMFTASLGGTYEQLMRLAKLLRCTDYSHTLKPGFQHYILKLLNTIVDKTLKINAGQNELEDLYESVYVCAIKVMALSSSLENVGDEDVNFGQTLIEKMVKLLNTSVPKIHERWFHLALQDVINLDAALEDNAEPVMLLNGLINMCHIRATYVHDLIEKVKIVFQHCCDSAQVKIFSSLSLATLFWSKTMNVERESSTQMLSEFVSQIVEPYLTWKAGSNAEAMRSLAMATLCALAQGAESESVEVLPSLAKYMPSLLEDRNVTTRHYAIKAVVYFREMSVEDLKPLAYATMQRMDDPSAGIRILAALAMGKLKPKFAETDTEENYEKEVWDAIVKRAMDLLLLYHESPEKDMRAAVAVTLKVLAKSHPEAWEERYQRALPMAQKKDLLTELYDKLTINEDSHTEVTSASQD</sequence>
<keyword id="KW-0970">Cilium biogenesis/degradation</keyword>
<keyword id="KW-0963">Cytoplasm</keyword>
<keyword id="KW-1185">Reference proteome</keyword>
<keyword id="KW-0677">Repeat</keyword>
<proteinExistence type="evidence at transcript level"/>
<reference key="1">
    <citation type="journal article" date="2000" name="Science">
        <title>The genome sequence of Drosophila melanogaster.</title>
        <authorList>
            <person name="Adams M.D."/>
            <person name="Celniker S.E."/>
            <person name="Holt R.A."/>
            <person name="Evans C.A."/>
            <person name="Gocayne J.D."/>
            <person name="Amanatides P.G."/>
            <person name="Scherer S.E."/>
            <person name="Li P.W."/>
            <person name="Hoskins R.A."/>
            <person name="Galle R.F."/>
            <person name="George R.A."/>
            <person name="Lewis S.E."/>
            <person name="Richards S."/>
            <person name="Ashburner M."/>
            <person name="Henderson S.N."/>
            <person name="Sutton G.G."/>
            <person name="Wortman J.R."/>
            <person name="Yandell M.D."/>
            <person name="Zhang Q."/>
            <person name="Chen L.X."/>
            <person name="Brandon R.C."/>
            <person name="Rogers Y.-H.C."/>
            <person name="Blazej R.G."/>
            <person name="Champe M."/>
            <person name="Pfeiffer B.D."/>
            <person name="Wan K.H."/>
            <person name="Doyle C."/>
            <person name="Baxter E.G."/>
            <person name="Helt G."/>
            <person name="Nelson C.R."/>
            <person name="Miklos G.L.G."/>
            <person name="Abril J.F."/>
            <person name="Agbayani A."/>
            <person name="An H.-J."/>
            <person name="Andrews-Pfannkoch C."/>
            <person name="Baldwin D."/>
            <person name="Ballew R.M."/>
            <person name="Basu A."/>
            <person name="Baxendale J."/>
            <person name="Bayraktaroglu L."/>
            <person name="Beasley E.M."/>
            <person name="Beeson K.Y."/>
            <person name="Benos P.V."/>
            <person name="Berman B.P."/>
            <person name="Bhandari D."/>
            <person name="Bolshakov S."/>
            <person name="Borkova D."/>
            <person name="Botchan M.R."/>
            <person name="Bouck J."/>
            <person name="Brokstein P."/>
            <person name="Brottier P."/>
            <person name="Burtis K.C."/>
            <person name="Busam D.A."/>
            <person name="Butler H."/>
            <person name="Cadieu E."/>
            <person name="Center A."/>
            <person name="Chandra I."/>
            <person name="Cherry J.M."/>
            <person name="Cawley S."/>
            <person name="Dahlke C."/>
            <person name="Davenport L.B."/>
            <person name="Davies P."/>
            <person name="de Pablos B."/>
            <person name="Delcher A."/>
            <person name="Deng Z."/>
            <person name="Mays A.D."/>
            <person name="Dew I."/>
            <person name="Dietz S.M."/>
            <person name="Dodson K."/>
            <person name="Doup L.E."/>
            <person name="Downes M."/>
            <person name="Dugan-Rocha S."/>
            <person name="Dunkov B.C."/>
            <person name="Dunn P."/>
            <person name="Durbin K.J."/>
            <person name="Evangelista C.C."/>
            <person name="Ferraz C."/>
            <person name="Ferriera S."/>
            <person name="Fleischmann W."/>
            <person name="Fosler C."/>
            <person name="Gabrielian A.E."/>
            <person name="Garg N.S."/>
            <person name="Gelbart W.M."/>
            <person name="Glasser K."/>
            <person name="Glodek A."/>
            <person name="Gong F."/>
            <person name="Gorrell J.H."/>
            <person name="Gu Z."/>
            <person name="Guan P."/>
            <person name="Harris M."/>
            <person name="Harris N.L."/>
            <person name="Harvey D.A."/>
            <person name="Heiman T.J."/>
            <person name="Hernandez J.R."/>
            <person name="Houck J."/>
            <person name="Hostin D."/>
            <person name="Houston K.A."/>
            <person name="Howland T.J."/>
            <person name="Wei M.-H."/>
            <person name="Ibegwam C."/>
            <person name="Jalali M."/>
            <person name="Kalush F."/>
            <person name="Karpen G.H."/>
            <person name="Ke Z."/>
            <person name="Kennison J.A."/>
            <person name="Ketchum K.A."/>
            <person name="Kimmel B.E."/>
            <person name="Kodira C.D."/>
            <person name="Kraft C.L."/>
            <person name="Kravitz S."/>
            <person name="Kulp D."/>
            <person name="Lai Z."/>
            <person name="Lasko P."/>
            <person name="Lei Y."/>
            <person name="Levitsky A.A."/>
            <person name="Li J.H."/>
            <person name="Li Z."/>
            <person name="Liang Y."/>
            <person name="Lin X."/>
            <person name="Liu X."/>
            <person name="Mattei B."/>
            <person name="McIntosh T.C."/>
            <person name="McLeod M.P."/>
            <person name="McPherson D."/>
            <person name="Merkulov G."/>
            <person name="Milshina N.V."/>
            <person name="Mobarry C."/>
            <person name="Morris J."/>
            <person name="Moshrefi A."/>
            <person name="Mount S.M."/>
            <person name="Moy M."/>
            <person name="Murphy B."/>
            <person name="Murphy L."/>
            <person name="Muzny D.M."/>
            <person name="Nelson D.L."/>
            <person name="Nelson D.R."/>
            <person name="Nelson K.A."/>
            <person name="Nixon K."/>
            <person name="Nusskern D.R."/>
            <person name="Pacleb J.M."/>
            <person name="Palazzolo M."/>
            <person name="Pittman G.S."/>
            <person name="Pan S."/>
            <person name="Pollard J."/>
            <person name="Puri V."/>
            <person name="Reese M.G."/>
            <person name="Reinert K."/>
            <person name="Remington K."/>
            <person name="Saunders R.D.C."/>
            <person name="Scheeler F."/>
            <person name="Shen H."/>
            <person name="Shue B.C."/>
            <person name="Siden-Kiamos I."/>
            <person name="Simpson M."/>
            <person name="Skupski M.P."/>
            <person name="Smith T.J."/>
            <person name="Spier E."/>
            <person name="Spradling A.C."/>
            <person name="Stapleton M."/>
            <person name="Strong R."/>
            <person name="Sun E."/>
            <person name="Svirskas R."/>
            <person name="Tector C."/>
            <person name="Turner R."/>
            <person name="Venter E."/>
            <person name="Wang A.H."/>
            <person name="Wang X."/>
            <person name="Wang Z.-Y."/>
            <person name="Wassarman D.A."/>
            <person name="Weinstock G.M."/>
            <person name="Weissenbach J."/>
            <person name="Williams S.M."/>
            <person name="Woodage T."/>
            <person name="Worley K.C."/>
            <person name="Wu D."/>
            <person name="Yang S."/>
            <person name="Yao Q.A."/>
            <person name="Ye J."/>
            <person name="Yeh R.-F."/>
            <person name="Zaveri J.S."/>
            <person name="Zhan M."/>
            <person name="Zhang G."/>
            <person name="Zhao Q."/>
            <person name="Zheng L."/>
            <person name="Zheng X.H."/>
            <person name="Zhong F.N."/>
            <person name="Zhong W."/>
            <person name="Zhou X."/>
            <person name="Zhu S.C."/>
            <person name="Zhu X."/>
            <person name="Smith H.O."/>
            <person name="Gibbs R.A."/>
            <person name="Myers E.W."/>
            <person name="Rubin G.M."/>
            <person name="Venter J.C."/>
        </authorList>
    </citation>
    <scope>NUCLEOTIDE SEQUENCE [LARGE SCALE GENOMIC DNA]</scope>
    <source>
        <strain>Berkeley</strain>
    </source>
</reference>
<reference key="2">
    <citation type="journal article" date="2002" name="Genome Biol.">
        <title>Annotation of the Drosophila melanogaster euchromatic genome: a systematic review.</title>
        <authorList>
            <person name="Misra S."/>
            <person name="Crosby M.A."/>
            <person name="Mungall C.J."/>
            <person name="Matthews B.B."/>
            <person name="Campbell K.S."/>
            <person name="Hradecky P."/>
            <person name="Huang Y."/>
            <person name="Kaminker J.S."/>
            <person name="Millburn G.H."/>
            <person name="Prochnik S.E."/>
            <person name="Smith C.D."/>
            <person name="Tupy J.L."/>
            <person name="Whitfield E.J."/>
            <person name="Bayraktaroglu L."/>
            <person name="Berman B.P."/>
            <person name="Bettencourt B.R."/>
            <person name="Celniker S.E."/>
            <person name="de Grey A.D.N.J."/>
            <person name="Drysdale R.A."/>
            <person name="Harris N.L."/>
            <person name="Richter J."/>
            <person name="Russo S."/>
            <person name="Schroeder A.J."/>
            <person name="Shu S.Q."/>
            <person name="Stapleton M."/>
            <person name="Yamada C."/>
            <person name="Ashburner M."/>
            <person name="Gelbart W.M."/>
            <person name="Rubin G.M."/>
            <person name="Lewis S.E."/>
        </authorList>
    </citation>
    <scope>GENOME REANNOTATION</scope>
    <source>
        <strain>Berkeley</strain>
    </source>
</reference>
<reference key="3">
    <citation type="submission" date="2003-03" db="EMBL/GenBank/DDBJ databases">
        <authorList>
            <person name="Stapleton M."/>
            <person name="Brokstein P."/>
            <person name="Hong L."/>
            <person name="Agbayani A."/>
            <person name="Carlson J."/>
            <person name="Champe M."/>
            <person name="Chavez C."/>
            <person name="Dorsett V."/>
            <person name="Dresnek D."/>
            <person name="Farfan D."/>
            <person name="Frise E."/>
            <person name="George R."/>
            <person name="Gonzalez M."/>
            <person name="Guarin H."/>
            <person name="Kronmiller B."/>
            <person name="Li P."/>
            <person name="Liao G."/>
            <person name="Miranda A."/>
            <person name="Mungall C.J."/>
            <person name="Nunoo J."/>
            <person name="Pacleb J."/>
            <person name="Paragas V."/>
            <person name="Park S."/>
            <person name="Patel S."/>
            <person name="Phouanenavong S."/>
            <person name="Wan K."/>
            <person name="Yu C."/>
            <person name="Lewis S.E."/>
            <person name="Rubin G.M."/>
            <person name="Celniker S.E."/>
        </authorList>
    </citation>
    <scope>NUCLEOTIDE SEQUENCE [LARGE SCALE MRNA]</scope>
    <source>
        <tissue>Ovary</tissue>
    </source>
</reference>
<reference key="4">
    <citation type="journal article" date="2014" name="PLoS Genet.">
        <title>HEATR2 plays a conserved role in assembly of the ciliary motile apparatus.</title>
        <authorList>
            <person name="Diggle C.P."/>
            <person name="Moore D.J."/>
            <person name="Mali G."/>
            <person name="zur Lage P."/>
            <person name="Ait-Lounis A."/>
            <person name="Schmidts M."/>
            <person name="Shoemark A."/>
            <person name="Garcia Munoz A."/>
            <person name="Halachev M.R."/>
            <person name="Gautier P."/>
            <person name="Yeyati P.L."/>
            <person name="Bonthron D.T."/>
            <person name="Carr I.M."/>
            <person name="Hayward B."/>
            <person name="Markham A.F."/>
            <person name="Hope J.E."/>
            <person name="von Kriegsheim A."/>
            <person name="Mitchison H.M."/>
            <person name="Jackson I.J."/>
            <person name="Durand B."/>
            <person name="Reith W."/>
            <person name="Sheridan E."/>
            <person name="Jarman A.P."/>
            <person name="Mill P."/>
        </authorList>
    </citation>
    <scope>FUNCTION</scope>
    <scope>DEVELOPMENTAL STAGE</scope>
    <scope>DISRUPTION PHENOTYPE</scope>
    <scope>TISSUE SPECIFICITY</scope>
</reference>
<gene>
    <name evidence="7" type="primary">Dnaaf5</name>
    <name evidence="4" type="synonym">HEATR2</name>
    <name evidence="7" type="ORF">CG31320</name>
</gene>
<feature type="chain" id="PRO_0000431657" description="Dynein axonemal assembly factor 5">
    <location>
        <begin position="1"/>
        <end position="845"/>
    </location>
</feature>
<feature type="repeat" description="HEAT 1" evidence="2">
    <location>
        <begin position="47"/>
        <end position="84"/>
    </location>
</feature>
<feature type="repeat" description="HEAT 2" evidence="2">
    <location>
        <begin position="138"/>
        <end position="175"/>
    </location>
</feature>
<feature type="repeat" description="HEAT 3" evidence="2">
    <location>
        <begin position="180"/>
        <end position="217"/>
    </location>
</feature>
<feature type="repeat" description="HEAT 4" evidence="2">
    <location>
        <begin position="260"/>
        <end position="297"/>
    </location>
</feature>
<feature type="repeat" description="HEAT 5" evidence="2">
    <location>
        <begin position="332"/>
        <end position="369"/>
    </location>
</feature>
<feature type="repeat" description="HEAT 6" evidence="2">
    <location>
        <begin position="523"/>
        <end position="561"/>
    </location>
</feature>
<feature type="repeat" description="HEAT 7" evidence="2">
    <location>
        <begin position="674"/>
        <end position="715"/>
    </location>
</feature>
<feature type="repeat" description="HEAT 8" evidence="2">
    <location>
        <begin position="766"/>
        <end position="803"/>
    </location>
</feature>
<protein>
    <recommendedName>
        <fullName evidence="7">Dynein axonemal assembly factor 5</fullName>
    </recommendedName>
    <alternativeName>
        <fullName evidence="4">HEAT repeat-containing protein 2 homolog</fullName>
    </alternativeName>
</protein>
<comment type="function">
    <text evidence="3">Cytoplasmic protein involved in the delivery of the dynein machinery to the motile cilium. It is required for the assembly of the axonemal dynein inner and outer arms, two structures attached to the peripheral outer doublet A microtubule of the axoneme, that play a crucial role in cilium motility.</text>
</comment>
<comment type="subcellular location">
    <subcellularLocation>
        <location evidence="3">Cytoplasm</location>
    </subcellularLocation>
    <subcellularLocation>
        <location evidence="1">Dynein axonemal particle</location>
    </subcellularLocation>
    <text evidence="3">Observed only in the cytoplasm of ciliated cells and absent from cilia.</text>
</comment>
<comment type="tissue specificity">
    <text evidence="6">Expressed in testis.</text>
</comment>
<comment type="developmental stage">
    <text evidence="3">Expressed in chordonotal neurons during their differentiation, after neuronal specification but before cilium formation. Also expressed in the non-ciliated mesoderm of stage 12 embryos.</text>
</comment>
<comment type="disruption phenotype">
    <text evidence="3">Homozygous deletion-mutant flies are not viable. The larvae are smaller but do not display obvious morphological phenotype. RNAi-mediated knockdown in sensory neurons affects flies movement coordination and impairs hearing. Testis-specific RNAi-mediated knockdown does not alter spermatogenesis and in particular the formation of sperm axonemes but it impairs sperm motility.</text>
</comment>
<comment type="similarity">
    <text evidence="5">Belongs to the DNAAF5 family.</text>
</comment>